<protein>
    <recommendedName>
        <fullName evidence="1">Small ribosomal subunit protein bS21</fullName>
    </recommendedName>
    <alternativeName>
        <fullName evidence="2">30S ribosomal protein S21</fullName>
    </alternativeName>
</protein>
<gene>
    <name evidence="1" type="primary">rpsU</name>
    <name type="ordered locus">C8J_0346</name>
</gene>
<dbReference type="EMBL" id="CP000814">
    <property type="protein sequence ID" value="ABV51945.1"/>
    <property type="molecule type" value="Genomic_DNA"/>
</dbReference>
<dbReference type="RefSeq" id="WP_002780697.1">
    <property type="nucleotide sequence ID" value="NC_009839.1"/>
</dbReference>
<dbReference type="SMR" id="A8FKF8"/>
<dbReference type="GeneID" id="98394943"/>
<dbReference type="KEGG" id="cju:C8J_0346"/>
<dbReference type="HOGENOM" id="CLU_159258_1_1_7"/>
<dbReference type="GO" id="GO:1990904">
    <property type="term" value="C:ribonucleoprotein complex"/>
    <property type="evidence" value="ECO:0007669"/>
    <property type="project" value="UniProtKB-KW"/>
</dbReference>
<dbReference type="GO" id="GO:0005840">
    <property type="term" value="C:ribosome"/>
    <property type="evidence" value="ECO:0007669"/>
    <property type="project" value="UniProtKB-KW"/>
</dbReference>
<dbReference type="GO" id="GO:0003735">
    <property type="term" value="F:structural constituent of ribosome"/>
    <property type="evidence" value="ECO:0007669"/>
    <property type="project" value="InterPro"/>
</dbReference>
<dbReference type="GO" id="GO:0006412">
    <property type="term" value="P:translation"/>
    <property type="evidence" value="ECO:0007669"/>
    <property type="project" value="UniProtKB-UniRule"/>
</dbReference>
<dbReference type="Gene3D" id="1.20.5.1150">
    <property type="entry name" value="Ribosomal protein S8"/>
    <property type="match status" value="1"/>
</dbReference>
<dbReference type="HAMAP" id="MF_00358">
    <property type="entry name" value="Ribosomal_bS21"/>
    <property type="match status" value="1"/>
</dbReference>
<dbReference type="InterPro" id="IPR001911">
    <property type="entry name" value="Ribosomal_bS21"/>
</dbReference>
<dbReference type="InterPro" id="IPR038380">
    <property type="entry name" value="Ribosomal_bS21_sf"/>
</dbReference>
<dbReference type="NCBIfam" id="TIGR00030">
    <property type="entry name" value="S21p"/>
    <property type="match status" value="1"/>
</dbReference>
<dbReference type="Pfam" id="PF01165">
    <property type="entry name" value="Ribosomal_S21"/>
    <property type="match status" value="1"/>
</dbReference>
<dbReference type="PRINTS" id="PR00976">
    <property type="entry name" value="RIBOSOMALS21"/>
</dbReference>
<keyword id="KW-0687">Ribonucleoprotein</keyword>
<keyword id="KW-0689">Ribosomal protein</keyword>
<sequence length="70" mass="8673">MPGIKVHPNESFDEAYRKFKKQVDRNLVVTEVRARRFFEPMTEIRKKQKISARKKMLKRLYMLRRYESRL</sequence>
<feature type="chain" id="PRO_1000072076" description="Small ribosomal subunit protein bS21">
    <location>
        <begin position="1"/>
        <end position="70"/>
    </location>
</feature>
<name>RS21_CAMJ8</name>
<organism>
    <name type="scientific">Campylobacter jejuni subsp. jejuni serotype O:6 (strain 81116 / NCTC 11828)</name>
    <dbReference type="NCBI Taxonomy" id="407148"/>
    <lineage>
        <taxon>Bacteria</taxon>
        <taxon>Pseudomonadati</taxon>
        <taxon>Campylobacterota</taxon>
        <taxon>Epsilonproteobacteria</taxon>
        <taxon>Campylobacterales</taxon>
        <taxon>Campylobacteraceae</taxon>
        <taxon>Campylobacter</taxon>
    </lineage>
</organism>
<reference key="1">
    <citation type="journal article" date="2007" name="J. Bacteriol.">
        <title>The complete genome sequence of Campylobacter jejuni strain 81116 (NCTC11828).</title>
        <authorList>
            <person name="Pearson B.M."/>
            <person name="Gaskin D.J.H."/>
            <person name="Segers R.P.A.M."/>
            <person name="Wells J.M."/>
            <person name="Nuijten P.J.M."/>
            <person name="van Vliet A.H.M."/>
        </authorList>
    </citation>
    <scope>NUCLEOTIDE SEQUENCE [LARGE SCALE GENOMIC DNA]</scope>
    <source>
        <strain>81116 / NCTC 11828</strain>
    </source>
</reference>
<accession>A8FKF8</accession>
<evidence type="ECO:0000255" key="1">
    <source>
        <dbReference type="HAMAP-Rule" id="MF_00358"/>
    </source>
</evidence>
<evidence type="ECO:0000305" key="2"/>
<comment type="similarity">
    <text evidence="1">Belongs to the bacterial ribosomal protein bS21 family.</text>
</comment>
<proteinExistence type="inferred from homology"/>